<reference key="1">
    <citation type="journal article" date="2008" name="J. Biotechnol.">
        <title>The genome of Xanthomonas campestris pv. campestris B100 and its use for the reconstruction of metabolic pathways involved in xanthan biosynthesis.</title>
        <authorList>
            <person name="Vorhoelter F.-J."/>
            <person name="Schneiker S."/>
            <person name="Goesmann A."/>
            <person name="Krause L."/>
            <person name="Bekel T."/>
            <person name="Kaiser O."/>
            <person name="Linke B."/>
            <person name="Patschkowski T."/>
            <person name="Rueckert C."/>
            <person name="Schmid J."/>
            <person name="Sidhu V.K."/>
            <person name="Sieber V."/>
            <person name="Tauch A."/>
            <person name="Watt S.A."/>
            <person name="Weisshaar B."/>
            <person name="Becker A."/>
            <person name="Niehaus K."/>
            <person name="Puehler A."/>
        </authorList>
    </citation>
    <scope>NUCLEOTIDE SEQUENCE [LARGE SCALE GENOMIC DNA]</scope>
    <source>
        <strain>B100</strain>
    </source>
</reference>
<organism>
    <name type="scientific">Xanthomonas campestris pv. campestris (strain B100)</name>
    <dbReference type="NCBI Taxonomy" id="509169"/>
    <lineage>
        <taxon>Bacteria</taxon>
        <taxon>Pseudomonadati</taxon>
        <taxon>Pseudomonadota</taxon>
        <taxon>Gammaproteobacteria</taxon>
        <taxon>Lysobacterales</taxon>
        <taxon>Lysobacteraceae</taxon>
        <taxon>Xanthomonas</taxon>
    </lineage>
</organism>
<comment type="function">
    <text evidence="1">Produces ATP from ADP in the presence of a proton gradient across the membrane. The catalytic sites are hosted primarily by the beta subunits.</text>
</comment>
<comment type="catalytic activity">
    <reaction evidence="1">
        <text>ATP + H2O + 4 H(+)(in) = ADP + phosphate + 5 H(+)(out)</text>
        <dbReference type="Rhea" id="RHEA:57720"/>
        <dbReference type="ChEBI" id="CHEBI:15377"/>
        <dbReference type="ChEBI" id="CHEBI:15378"/>
        <dbReference type="ChEBI" id="CHEBI:30616"/>
        <dbReference type="ChEBI" id="CHEBI:43474"/>
        <dbReference type="ChEBI" id="CHEBI:456216"/>
        <dbReference type="EC" id="7.1.2.2"/>
    </reaction>
</comment>
<comment type="subunit">
    <text evidence="1">F-type ATPases have 2 components, CF(1) - the catalytic core - and CF(0) - the membrane proton channel. CF(1) has five subunits: alpha(3), beta(3), gamma(1), delta(1), epsilon(1). CF(0) has three main subunits: a(1), b(2) and c(9-12). The alpha and beta chains form an alternating ring which encloses part of the gamma chain. CF(1) is attached to CF(0) by a central stalk formed by the gamma and epsilon chains, while a peripheral stalk is formed by the delta and b chains.</text>
</comment>
<comment type="subcellular location">
    <subcellularLocation>
        <location evidence="1">Cell inner membrane</location>
        <topology evidence="1">Peripheral membrane protein</topology>
    </subcellularLocation>
</comment>
<comment type="similarity">
    <text evidence="1">Belongs to the ATPase alpha/beta chains family.</text>
</comment>
<proteinExistence type="inferred from homology"/>
<feature type="chain" id="PRO_0000339601" description="ATP synthase subunit beta">
    <location>
        <begin position="1"/>
        <end position="468"/>
    </location>
</feature>
<feature type="binding site" evidence="1">
    <location>
        <begin position="148"/>
        <end position="155"/>
    </location>
    <ligand>
        <name>ATP</name>
        <dbReference type="ChEBI" id="CHEBI:30616"/>
    </ligand>
</feature>
<sequence length="468" mass="50912">MSQGKIVQIIGAVVDVEFQRNEVPKVYHALKVEGTAITLEVQQQLGDGVVRTIALGSTDGLKRNLLATNTERAISVPVGAGTLGRIMDVLGRPIDEAGDVQASDHWEIHRAAPSYEDQSSSTELLETGIKVIDLMCPFAKGGKVGLFGGAGVGKTVNMMELINNIAKAHSGLSVFAGVGERTREGNDFYHEMKDSNVLDKVAMVYGQMNEPPGNRLRVALTGLTMAEYFRDEKDASGKGKDVLLFVDNIYRYTLAGTEVSALLGRMPSAVGYQPTLAEEMGVLQERITSTKSGSITSIQAVYVPADDLTDPSPATTFAHLDSTVTLSRNIASLGIYPAVDPLDSTSRQMDPLVIGHEHYDTAQRVQQTLQKYKELKDIIAILGMDELSEEDKQSVSRARKIERFFSQPFHVAEVFTGSPGKYVSLKDTIRGFKAICDGEYDHLPEQAFYMVGSIEEAVEKANKMSAKA</sequence>
<protein>
    <recommendedName>
        <fullName evidence="1">ATP synthase subunit beta</fullName>
        <ecNumber evidence="1">7.1.2.2</ecNumber>
    </recommendedName>
    <alternativeName>
        <fullName evidence="1">ATP synthase F1 sector subunit beta</fullName>
    </alternativeName>
    <alternativeName>
        <fullName evidence="1">F-ATPase subunit beta</fullName>
    </alternativeName>
</protein>
<evidence type="ECO:0000255" key="1">
    <source>
        <dbReference type="HAMAP-Rule" id="MF_01347"/>
    </source>
</evidence>
<keyword id="KW-0066">ATP synthesis</keyword>
<keyword id="KW-0067">ATP-binding</keyword>
<keyword id="KW-0997">Cell inner membrane</keyword>
<keyword id="KW-1003">Cell membrane</keyword>
<keyword id="KW-0139">CF(1)</keyword>
<keyword id="KW-0375">Hydrogen ion transport</keyword>
<keyword id="KW-0406">Ion transport</keyword>
<keyword id="KW-0472">Membrane</keyword>
<keyword id="KW-0547">Nucleotide-binding</keyword>
<keyword id="KW-1278">Translocase</keyword>
<keyword id="KW-0813">Transport</keyword>
<gene>
    <name evidence="1" type="primary">atpD</name>
    <name type="ordered locus">xcc-b100_3794</name>
</gene>
<dbReference type="EC" id="7.1.2.2" evidence="1"/>
<dbReference type="EMBL" id="AM920689">
    <property type="protein sequence ID" value="CAP53161.1"/>
    <property type="molecule type" value="Genomic_DNA"/>
</dbReference>
<dbReference type="SMR" id="B0RWC2"/>
<dbReference type="KEGG" id="xca:xcc-b100_3794"/>
<dbReference type="HOGENOM" id="CLU_022398_0_2_6"/>
<dbReference type="Proteomes" id="UP000001188">
    <property type="component" value="Chromosome"/>
</dbReference>
<dbReference type="GO" id="GO:0005886">
    <property type="term" value="C:plasma membrane"/>
    <property type="evidence" value="ECO:0007669"/>
    <property type="project" value="UniProtKB-SubCell"/>
</dbReference>
<dbReference type="GO" id="GO:0045259">
    <property type="term" value="C:proton-transporting ATP synthase complex"/>
    <property type="evidence" value="ECO:0007669"/>
    <property type="project" value="UniProtKB-KW"/>
</dbReference>
<dbReference type="GO" id="GO:0005524">
    <property type="term" value="F:ATP binding"/>
    <property type="evidence" value="ECO:0007669"/>
    <property type="project" value="UniProtKB-UniRule"/>
</dbReference>
<dbReference type="GO" id="GO:0016887">
    <property type="term" value="F:ATP hydrolysis activity"/>
    <property type="evidence" value="ECO:0007669"/>
    <property type="project" value="InterPro"/>
</dbReference>
<dbReference type="GO" id="GO:0046933">
    <property type="term" value="F:proton-transporting ATP synthase activity, rotational mechanism"/>
    <property type="evidence" value="ECO:0007669"/>
    <property type="project" value="UniProtKB-UniRule"/>
</dbReference>
<dbReference type="CDD" id="cd18110">
    <property type="entry name" value="ATP-synt_F1_beta_C"/>
    <property type="match status" value="1"/>
</dbReference>
<dbReference type="CDD" id="cd18115">
    <property type="entry name" value="ATP-synt_F1_beta_N"/>
    <property type="match status" value="1"/>
</dbReference>
<dbReference type="CDD" id="cd01133">
    <property type="entry name" value="F1-ATPase_beta_CD"/>
    <property type="match status" value="1"/>
</dbReference>
<dbReference type="FunFam" id="1.10.1140.10:FF:000001">
    <property type="entry name" value="ATP synthase subunit beta"/>
    <property type="match status" value="1"/>
</dbReference>
<dbReference type="FunFam" id="3.40.50.300:FF:000004">
    <property type="entry name" value="ATP synthase subunit beta"/>
    <property type="match status" value="1"/>
</dbReference>
<dbReference type="Gene3D" id="2.40.10.170">
    <property type="match status" value="1"/>
</dbReference>
<dbReference type="Gene3D" id="1.10.1140.10">
    <property type="entry name" value="Bovine Mitochondrial F1-atpase, Atp Synthase Beta Chain, Chain D, domain 3"/>
    <property type="match status" value="1"/>
</dbReference>
<dbReference type="Gene3D" id="3.40.50.300">
    <property type="entry name" value="P-loop containing nucleotide triphosphate hydrolases"/>
    <property type="match status" value="1"/>
</dbReference>
<dbReference type="HAMAP" id="MF_01347">
    <property type="entry name" value="ATP_synth_beta_bact"/>
    <property type="match status" value="1"/>
</dbReference>
<dbReference type="InterPro" id="IPR003593">
    <property type="entry name" value="AAA+_ATPase"/>
</dbReference>
<dbReference type="InterPro" id="IPR055190">
    <property type="entry name" value="ATP-synt_VA_C"/>
</dbReference>
<dbReference type="InterPro" id="IPR005722">
    <property type="entry name" value="ATP_synth_F1_bsu"/>
</dbReference>
<dbReference type="InterPro" id="IPR020003">
    <property type="entry name" value="ATPase_a/bsu_AS"/>
</dbReference>
<dbReference type="InterPro" id="IPR050053">
    <property type="entry name" value="ATPase_alpha/beta_chains"/>
</dbReference>
<dbReference type="InterPro" id="IPR004100">
    <property type="entry name" value="ATPase_F1/V1/A1_a/bsu_N"/>
</dbReference>
<dbReference type="InterPro" id="IPR036121">
    <property type="entry name" value="ATPase_F1/V1/A1_a/bsu_N_sf"/>
</dbReference>
<dbReference type="InterPro" id="IPR000194">
    <property type="entry name" value="ATPase_F1/V1/A1_a/bsu_nucl-bd"/>
</dbReference>
<dbReference type="InterPro" id="IPR024034">
    <property type="entry name" value="ATPase_F1/V1_b/a_C"/>
</dbReference>
<dbReference type="InterPro" id="IPR027417">
    <property type="entry name" value="P-loop_NTPase"/>
</dbReference>
<dbReference type="NCBIfam" id="TIGR01039">
    <property type="entry name" value="atpD"/>
    <property type="match status" value="1"/>
</dbReference>
<dbReference type="PANTHER" id="PTHR15184">
    <property type="entry name" value="ATP SYNTHASE"/>
    <property type="match status" value="1"/>
</dbReference>
<dbReference type="PANTHER" id="PTHR15184:SF71">
    <property type="entry name" value="ATP SYNTHASE SUBUNIT BETA, MITOCHONDRIAL"/>
    <property type="match status" value="1"/>
</dbReference>
<dbReference type="Pfam" id="PF00006">
    <property type="entry name" value="ATP-synt_ab"/>
    <property type="match status" value="1"/>
</dbReference>
<dbReference type="Pfam" id="PF02874">
    <property type="entry name" value="ATP-synt_ab_N"/>
    <property type="match status" value="1"/>
</dbReference>
<dbReference type="Pfam" id="PF22919">
    <property type="entry name" value="ATP-synt_VA_C"/>
    <property type="match status" value="1"/>
</dbReference>
<dbReference type="SMART" id="SM00382">
    <property type="entry name" value="AAA"/>
    <property type="match status" value="1"/>
</dbReference>
<dbReference type="SUPFAM" id="SSF47917">
    <property type="entry name" value="C-terminal domain of alpha and beta subunits of F1 ATP synthase"/>
    <property type="match status" value="1"/>
</dbReference>
<dbReference type="SUPFAM" id="SSF50615">
    <property type="entry name" value="N-terminal domain of alpha and beta subunits of F1 ATP synthase"/>
    <property type="match status" value="1"/>
</dbReference>
<dbReference type="SUPFAM" id="SSF52540">
    <property type="entry name" value="P-loop containing nucleoside triphosphate hydrolases"/>
    <property type="match status" value="1"/>
</dbReference>
<dbReference type="PROSITE" id="PS00152">
    <property type="entry name" value="ATPASE_ALPHA_BETA"/>
    <property type="match status" value="1"/>
</dbReference>
<accession>B0RWC2</accession>
<name>ATPB_XANCB</name>